<comment type="similarity">
    <text evidence="1">Belongs to the ATP-dependent AMP-binding enzyme family.</text>
</comment>
<comment type="sequence caution" evidence="1">
    <conflict type="frameshift">
        <sequence resource="EMBL-CDS" id="AAA17075"/>
    </conflict>
</comment>
<name>FAD21_MYCLE</name>
<evidence type="ECO:0000305" key="1"/>
<protein>
    <recommendedName>
        <fullName>Putative fatty-acid--CoA ligase fadD21</fullName>
        <ecNumber>6.2.1.-</ecNumber>
    </recommendedName>
    <alternativeName>
        <fullName>Acyl-CoA synthetase</fullName>
    </alternativeName>
</protein>
<dbReference type="EC" id="6.2.1.-"/>
<dbReference type="EMBL" id="U00010">
    <property type="protein sequence ID" value="AAA17075.1"/>
    <property type="status" value="ALT_FRAME"/>
    <property type="molecule type" value="Genomic_DNA"/>
</dbReference>
<dbReference type="EMBL" id="AL583921">
    <property type="protein sequence ID" value="CAC31615.1"/>
    <property type="molecule type" value="Genomic_DNA"/>
</dbReference>
<dbReference type="PIR" id="D87063">
    <property type="entry name" value="D87063"/>
</dbReference>
<dbReference type="PIR" id="S72711">
    <property type="entry name" value="S72711"/>
</dbReference>
<dbReference type="RefSeq" id="NP_301895.1">
    <property type="nucleotide sequence ID" value="NC_002677.1"/>
</dbReference>
<dbReference type="RefSeq" id="WP_010908216.1">
    <property type="nucleotide sequence ID" value="NC_002677.1"/>
</dbReference>
<dbReference type="SMR" id="P54200"/>
<dbReference type="STRING" id="272631.gene:17575065"/>
<dbReference type="KEGG" id="mle:ML1234"/>
<dbReference type="PATRIC" id="fig|272631.5.peg.2266"/>
<dbReference type="Leproma" id="ML1234"/>
<dbReference type="eggNOG" id="COG0318">
    <property type="taxonomic scope" value="Bacteria"/>
</dbReference>
<dbReference type="HOGENOM" id="CLU_000022_23_7_11"/>
<dbReference type="OrthoDB" id="3671040at2"/>
<dbReference type="Proteomes" id="UP000000806">
    <property type="component" value="Chromosome"/>
</dbReference>
<dbReference type="GO" id="GO:0005886">
    <property type="term" value="C:plasma membrane"/>
    <property type="evidence" value="ECO:0007669"/>
    <property type="project" value="TreeGrafter"/>
</dbReference>
<dbReference type="GO" id="GO:0070566">
    <property type="term" value="F:adenylyltransferase activity"/>
    <property type="evidence" value="ECO:0007669"/>
    <property type="project" value="TreeGrafter"/>
</dbReference>
<dbReference type="GO" id="GO:0016874">
    <property type="term" value="F:ligase activity"/>
    <property type="evidence" value="ECO:0007669"/>
    <property type="project" value="UniProtKB-KW"/>
</dbReference>
<dbReference type="GO" id="GO:0071766">
    <property type="term" value="P:Actinobacterium-type cell wall biogenesis"/>
    <property type="evidence" value="ECO:0007669"/>
    <property type="project" value="UniProtKB-ARBA"/>
</dbReference>
<dbReference type="GO" id="GO:0006633">
    <property type="term" value="P:fatty acid biosynthetic process"/>
    <property type="evidence" value="ECO:0007669"/>
    <property type="project" value="TreeGrafter"/>
</dbReference>
<dbReference type="CDD" id="cd05931">
    <property type="entry name" value="FAAL"/>
    <property type="match status" value="1"/>
</dbReference>
<dbReference type="FunFam" id="3.30.300.30:FF:000016">
    <property type="entry name" value="Fatty-acid-CoA ligase FadD26"/>
    <property type="match status" value="1"/>
</dbReference>
<dbReference type="FunFam" id="3.40.50.12780:FF:000013">
    <property type="entry name" value="Long-chain-fatty-acid--AMP ligase FadD32"/>
    <property type="match status" value="1"/>
</dbReference>
<dbReference type="Gene3D" id="3.30.300.30">
    <property type="match status" value="1"/>
</dbReference>
<dbReference type="Gene3D" id="3.40.50.12780">
    <property type="entry name" value="N-terminal domain of ligase-like"/>
    <property type="match status" value="1"/>
</dbReference>
<dbReference type="InterPro" id="IPR025110">
    <property type="entry name" value="AMP-bd_C"/>
</dbReference>
<dbReference type="InterPro" id="IPR045851">
    <property type="entry name" value="AMP-bd_C_sf"/>
</dbReference>
<dbReference type="InterPro" id="IPR000873">
    <property type="entry name" value="AMP-dep_synth/lig_dom"/>
</dbReference>
<dbReference type="InterPro" id="IPR042099">
    <property type="entry name" value="ANL_N_sf"/>
</dbReference>
<dbReference type="InterPro" id="IPR040097">
    <property type="entry name" value="FAAL/FAAC"/>
</dbReference>
<dbReference type="InterPro" id="IPR054928">
    <property type="entry name" value="FAAL_FadD21"/>
</dbReference>
<dbReference type="NCBIfam" id="NF038337">
    <property type="entry name" value="FAAL_FadD21"/>
    <property type="match status" value="1"/>
</dbReference>
<dbReference type="NCBIfam" id="NF004509">
    <property type="entry name" value="PRK05850.1"/>
    <property type="match status" value="1"/>
</dbReference>
<dbReference type="PANTHER" id="PTHR22754:SF32">
    <property type="entry name" value="DISCO-INTERACTING PROTEIN 2"/>
    <property type="match status" value="1"/>
</dbReference>
<dbReference type="PANTHER" id="PTHR22754">
    <property type="entry name" value="DISCO-INTERACTING PROTEIN 2 DIP2 -RELATED"/>
    <property type="match status" value="1"/>
</dbReference>
<dbReference type="Pfam" id="PF00501">
    <property type="entry name" value="AMP-binding"/>
    <property type="match status" value="1"/>
</dbReference>
<dbReference type="Pfam" id="PF23024">
    <property type="entry name" value="AMP-dom_DIP2-like"/>
    <property type="match status" value="1"/>
</dbReference>
<dbReference type="SUPFAM" id="SSF56801">
    <property type="entry name" value="Acetyl-CoA synthetase-like"/>
    <property type="match status" value="1"/>
</dbReference>
<keyword id="KW-0276">Fatty acid metabolism</keyword>
<keyword id="KW-0436">Ligase</keyword>
<keyword id="KW-0443">Lipid metabolism</keyword>
<keyword id="KW-1185">Reference proteome</keyword>
<proteinExistence type="inferred from homology"/>
<gene>
    <name type="primary">fadD21</name>
    <name type="synonym">masC</name>
    <name type="ordered locus">ML1234</name>
</gene>
<feature type="chain" id="PRO_0000193135" description="Putative fatty-acid--CoA ligase fadD21">
    <location>
        <begin position="1"/>
        <end position="579"/>
    </location>
</feature>
<feature type="sequence conflict" description="In Ref. 1; AAA17075." evidence="1" ref="1">
    <original>A</original>
    <variation>T</variation>
    <location>
        <position position="179"/>
    </location>
</feature>
<sequence>MQNSSVLSFLRERAGLQPDDEAFSFTDYEQDWAGVRKTLTWAQLYQRTLNVAHELRRHGSIRDRAVILAPQGLDYIIAFLGAMQAGFIAVPLSVPQAGSHDERVGAVLADTSPSVVLTTSAVADAIAKYVDHSDTDTVPAILEVDSPNLDVENKSNIRLTDAPSTAYLQYTSGSTRLPAGVMVTHRNLMVNFQQLMADYFAPTNGVAPLDLTIVSWLPFYHDMGLVLGVVAPILGGWRSELTSPISFLQRPARWIQAMATSSHPFSAGPNFAFELAARRTSDADIAGLDLGACQGIISGSERIHPATLNRFSDRFARINFRDDMMLPSYGLAEGTVYAASRPKGSSPEVVYFEPAKLSEGTVKRCEARTGAPLLSYGTPKSPIVRIVDSDTCIECPTGRVGEIWLHGDNVAEGYWHKPEETQRTFGGKLANPSPGTPEGPWLRTGDLGFISEDELFIVGRMKDLLIVYGRNHYPEDIESTVQEITGGRVAAISVPVDETEKLVTIIEVKKRGDSDAEAMQKLVAVKNNITAAISKSHGLNVADLVLVPPGSIPTTTSGKVRRTACVEQYRRQQFSRLDG</sequence>
<organism>
    <name type="scientific">Mycobacterium leprae (strain TN)</name>
    <dbReference type="NCBI Taxonomy" id="272631"/>
    <lineage>
        <taxon>Bacteria</taxon>
        <taxon>Bacillati</taxon>
        <taxon>Actinomycetota</taxon>
        <taxon>Actinomycetes</taxon>
        <taxon>Mycobacteriales</taxon>
        <taxon>Mycobacteriaceae</taxon>
        <taxon>Mycobacterium</taxon>
    </lineage>
</organism>
<reference key="1">
    <citation type="submission" date="1994-03" db="EMBL/GenBank/DDBJ databases">
        <authorList>
            <person name="Smith D.R."/>
            <person name="Robison K."/>
        </authorList>
    </citation>
    <scope>NUCLEOTIDE SEQUENCE [GENOMIC DNA]</scope>
</reference>
<reference key="2">
    <citation type="journal article" date="2001" name="Nature">
        <title>Massive gene decay in the leprosy bacillus.</title>
        <authorList>
            <person name="Cole S.T."/>
            <person name="Eiglmeier K."/>
            <person name="Parkhill J."/>
            <person name="James K.D."/>
            <person name="Thomson N.R."/>
            <person name="Wheeler P.R."/>
            <person name="Honore N."/>
            <person name="Garnier T."/>
            <person name="Churcher C.M."/>
            <person name="Harris D.E."/>
            <person name="Mungall K.L."/>
            <person name="Basham D."/>
            <person name="Brown D."/>
            <person name="Chillingworth T."/>
            <person name="Connor R."/>
            <person name="Davies R.M."/>
            <person name="Devlin K."/>
            <person name="Duthoy S."/>
            <person name="Feltwell T."/>
            <person name="Fraser A."/>
            <person name="Hamlin N."/>
            <person name="Holroyd S."/>
            <person name="Hornsby T."/>
            <person name="Jagels K."/>
            <person name="Lacroix C."/>
            <person name="Maclean J."/>
            <person name="Moule S."/>
            <person name="Murphy L.D."/>
            <person name="Oliver K."/>
            <person name="Quail M.A."/>
            <person name="Rajandream M.A."/>
            <person name="Rutherford K.M."/>
            <person name="Rutter S."/>
            <person name="Seeger K."/>
            <person name="Simon S."/>
            <person name="Simmonds M."/>
            <person name="Skelton J."/>
            <person name="Squares R."/>
            <person name="Squares S."/>
            <person name="Stevens K."/>
            <person name="Taylor K."/>
            <person name="Whitehead S."/>
            <person name="Woodward J.R."/>
            <person name="Barrell B.G."/>
        </authorList>
    </citation>
    <scope>NUCLEOTIDE SEQUENCE [LARGE SCALE GENOMIC DNA]</scope>
    <source>
        <strain>TN</strain>
    </source>
</reference>
<accession>P54200</accession>
<accession>Q9CC61</accession>